<gene>
    <name type="ordered locus">lmo1012</name>
</gene>
<reference key="1">
    <citation type="journal article" date="2001" name="Science">
        <title>Comparative genomics of Listeria species.</title>
        <authorList>
            <person name="Glaser P."/>
            <person name="Frangeul L."/>
            <person name="Buchrieser C."/>
            <person name="Rusniok C."/>
            <person name="Amend A."/>
            <person name="Baquero F."/>
            <person name="Berche P."/>
            <person name="Bloecker H."/>
            <person name="Brandt P."/>
            <person name="Chakraborty T."/>
            <person name="Charbit A."/>
            <person name="Chetouani F."/>
            <person name="Couve E."/>
            <person name="de Daruvar A."/>
            <person name="Dehoux P."/>
            <person name="Domann E."/>
            <person name="Dominguez-Bernal G."/>
            <person name="Duchaud E."/>
            <person name="Durant L."/>
            <person name="Dussurget O."/>
            <person name="Entian K.-D."/>
            <person name="Fsihi H."/>
            <person name="Garcia-del Portillo F."/>
            <person name="Garrido P."/>
            <person name="Gautier L."/>
            <person name="Goebel W."/>
            <person name="Gomez-Lopez N."/>
            <person name="Hain T."/>
            <person name="Hauf J."/>
            <person name="Jackson D."/>
            <person name="Jones L.-M."/>
            <person name="Kaerst U."/>
            <person name="Kreft J."/>
            <person name="Kuhn M."/>
            <person name="Kunst F."/>
            <person name="Kurapkat G."/>
            <person name="Madueno E."/>
            <person name="Maitournam A."/>
            <person name="Mata Vicente J."/>
            <person name="Ng E."/>
            <person name="Nedjari H."/>
            <person name="Nordsiek G."/>
            <person name="Novella S."/>
            <person name="de Pablos B."/>
            <person name="Perez-Diaz J.-C."/>
            <person name="Purcell R."/>
            <person name="Remmel B."/>
            <person name="Rose M."/>
            <person name="Schlueter T."/>
            <person name="Simoes N."/>
            <person name="Tierrez A."/>
            <person name="Vazquez-Boland J.-A."/>
            <person name="Voss H."/>
            <person name="Wehland J."/>
            <person name="Cossart P."/>
        </authorList>
    </citation>
    <scope>NUCLEOTIDE SEQUENCE [LARGE SCALE GENOMIC DNA]</scope>
    <source>
        <strain>ATCC BAA-679 / EGD-e</strain>
    </source>
</reference>
<feature type="chain" id="PRO_0000376773" description="N-acetyldiaminopimelate deacetylase">
    <location>
        <begin position="1"/>
        <end position="371"/>
    </location>
</feature>
<feature type="active site" evidence="1">
    <location>
        <position position="68"/>
    </location>
</feature>
<feature type="active site" description="Proton acceptor" evidence="1">
    <location>
        <position position="127"/>
    </location>
</feature>
<comment type="function">
    <text evidence="1">Catalyzes the conversion of N-acetyl-diaminopimelate to diaminopimelate and acetate.</text>
</comment>
<comment type="catalytic activity">
    <reaction evidence="1">
        <text>N-acetyl-(2S,6S)-2,6-diaminopimelate + H2O = (2S,6S)-2,6-diaminopimelate + acetate</text>
        <dbReference type="Rhea" id="RHEA:20405"/>
        <dbReference type="ChEBI" id="CHEBI:15377"/>
        <dbReference type="ChEBI" id="CHEBI:30089"/>
        <dbReference type="ChEBI" id="CHEBI:57609"/>
        <dbReference type="ChEBI" id="CHEBI:58767"/>
        <dbReference type="EC" id="3.5.1.47"/>
    </reaction>
</comment>
<comment type="pathway">
    <text evidence="1">Amino-acid biosynthesis; L-lysine biosynthesis via DAP pathway; LL-2,6-diaminopimelate from (S)-tetrahydrodipicolinate (acetylase route): step 3/3.</text>
</comment>
<comment type="similarity">
    <text evidence="1">Belongs to the peptidase M20A family. N-acetyldiaminopimelate deacetylase subfamily.</text>
</comment>
<dbReference type="EC" id="3.5.1.47" evidence="1"/>
<dbReference type="EMBL" id="AL591977">
    <property type="protein sequence ID" value="CAC99090.1"/>
    <property type="molecule type" value="Genomic_DNA"/>
</dbReference>
<dbReference type="PIR" id="AD1201">
    <property type="entry name" value="AD1201"/>
</dbReference>
<dbReference type="RefSeq" id="NP_464537.1">
    <property type="nucleotide sequence ID" value="NC_003210.1"/>
</dbReference>
<dbReference type="RefSeq" id="WP_003722876.1">
    <property type="nucleotide sequence ID" value="NZ_CP149495.1"/>
</dbReference>
<dbReference type="SMR" id="Q8Y8A0"/>
<dbReference type="STRING" id="169963.gene:17593668"/>
<dbReference type="MEROPS" id="M20.A27"/>
<dbReference type="PaxDb" id="169963-lmo1012"/>
<dbReference type="EnsemblBacteria" id="CAC99090">
    <property type="protein sequence ID" value="CAC99090"/>
    <property type="gene ID" value="CAC99090"/>
</dbReference>
<dbReference type="GeneID" id="986510"/>
<dbReference type="KEGG" id="lmo:lmo1012"/>
<dbReference type="PATRIC" id="fig|169963.11.peg.1040"/>
<dbReference type="eggNOG" id="COG1473">
    <property type="taxonomic scope" value="Bacteria"/>
</dbReference>
<dbReference type="HOGENOM" id="CLU_023257_0_1_9"/>
<dbReference type="OrthoDB" id="9776731at2"/>
<dbReference type="PhylomeDB" id="Q8Y8A0"/>
<dbReference type="BioCyc" id="LMON169963:LMO1012-MONOMER"/>
<dbReference type="UniPathway" id="UPA00034">
    <property type="reaction ID" value="UER00024"/>
</dbReference>
<dbReference type="Proteomes" id="UP000000817">
    <property type="component" value="Chromosome"/>
</dbReference>
<dbReference type="GO" id="GO:0050118">
    <property type="term" value="F:N-acetyldiaminopimelate deacetylase activity"/>
    <property type="evidence" value="ECO:0000318"/>
    <property type="project" value="GO_Central"/>
</dbReference>
<dbReference type="GO" id="GO:0019877">
    <property type="term" value="P:diaminopimelate biosynthetic process"/>
    <property type="evidence" value="ECO:0000318"/>
    <property type="project" value="GO_Central"/>
</dbReference>
<dbReference type="GO" id="GO:0009089">
    <property type="term" value="P:lysine biosynthetic process via diaminopimelate"/>
    <property type="evidence" value="ECO:0007669"/>
    <property type="project" value="UniProtKB-UniRule"/>
</dbReference>
<dbReference type="CDD" id="cd05670">
    <property type="entry name" value="M20_Acy1_YkuR-like"/>
    <property type="match status" value="1"/>
</dbReference>
<dbReference type="FunFam" id="3.30.70.360:FF:000001">
    <property type="entry name" value="N-acetyldiaminopimelate deacetylase"/>
    <property type="match status" value="1"/>
</dbReference>
<dbReference type="Gene3D" id="3.30.70.360">
    <property type="match status" value="1"/>
</dbReference>
<dbReference type="Gene3D" id="3.40.630.10">
    <property type="entry name" value="Zn peptidases"/>
    <property type="match status" value="1"/>
</dbReference>
<dbReference type="HAMAP" id="MF_01692">
    <property type="entry name" value="DapEL"/>
    <property type="match status" value="1"/>
</dbReference>
<dbReference type="InterPro" id="IPR023905">
    <property type="entry name" value="AcetylDAP_deacetylase"/>
</dbReference>
<dbReference type="InterPro" id="IPR017439">
    <property type="entry name" value="Amidohydrolase"/>
</dbReference>
<dbReference type="InterPro" id="IPR036264">
    <property type="entry name" value="Bact_exopeptidase_dim_dom"/>
</dbReference>
<dbReference type="InterPro" id="IPR002933">
    <property type="entry name" value="Peptidase_M20"/>
</dbReference>
<dbReference type="InterPro" id="IPR011650">
    <property type="entry name" value="Peptidase_M20_dimer"/>
</dbReference>
<dbReference type="NCBIfam" id="TIGR01891">
    <property type="entry name" value="amidohydrolases"/>
    <property type="match status" value="1"/>
</dbReference>
<dbReference type="PANTHER" id="PTHR11014:SF98">
    <property type="entry name" value="N-ACETYLDIAMINOPIMELATE DEACETYLASE"/>
    <property type="match status" value="1"/>
</dbReference>
<dbReference type="PANTHER" id="PTHR11014">
    <property type="entry name" value="PEPTIDASE M20 FAMILY MEMBER"/>
    <property type="match status" value="1"/>
</dbReference>
<dbReference type="Pfam" id="PF07687">
    <property type="entry name" value="M20_dimer"/>
    <property type="match status" value="1"/>
</dbReference>
<dbReference type="Pfam" id="PF01546">
    <property type="entry name" value="Peptidase_M20"/>
    <property type="match status" value="1"/>
</dbReference>
<dbReference type="PIRSF" id="PIRSF005962">
    <property type="entry name" value="Pept_M20D_amidohydro"/>
    <property type="match status" value="1"/>
</dbReference>
<dbReference type="SUPFAM" id="SSF55031">
    <property type="entry name" value="Bacterial exopeptidase dimerisation domain"/>
    <property type="match status" value="1"/>
</dbReference>
<dbReference type="SUPFAM" id="SSF53187">
    <property type="entry name" value="Zn-dependent exopeptidases"/>
    <property type="match status" value="1"/>
</dbReference>
<evidence type="ECO:0000255" key="1">
    <source>
        <dbReference type="HAMAP-Rule" id="MF_01692"/>
    </source>
</evidence>
<accession>Q8Y8A0</accession>
<keyword id="KW-0028">Amino-acid biosynthesis</keyword>
<keyword id="KW-0220">Diaminopimelate biosynthesis</keyword>
<keyword id="KW-0378">Hydrolase</keyword>
<keyword id="KW-0457">Lysine biosynthesis</keyword>
<keyword id="KW-1185">Reference proteome</keyword>
<sequence length="371" mass="41630">MLNEFIAIRRELHQIPETGYKELKTQAYLLDYISKLPSGHLEVKKWRTGILVLVKGTNPEKTIGYRTDIDALPITEETELPFASKHPGNMHACGHDLHMSIALGVLTHFASKPAKDNLLFVFQPAEEGPGGAKPIMESTEFAEWRPDSIYGLHIAPEYKVGEIAIKPGLLFANTSELFISFKGKGGHAAYPHLANDMVVAASAFVGQMQTIISRNIDPMDSAVITIGRIHGGEIQNVIAETAYLDGTIRTLSPETMEIVWTRLKQLAKGWEEAYQCEVEFHPGSDYYQVDNDPVETEEFIHFLEEQYPESYVPARSAMTGEDFGYFLSEIKGFMFWLGVDSEYSLHHAKLNPKEEAIPFAIDVLIHFLESK</sequence>
<name>DAPEL_LISMO</name>
<protein>
    <recommendedName>
        <fullName evidence="1">N-acetyldiaminopimelate deacetylase</fullName>
        <ecNumber evidence="1">3.5.1.47</ecNumber>
    </recommendedName>
</protein>
<proteinExistence type="inferred from homology"/>
<organism>
    <name type="scientific">Listeria monocytogenes serovar 1/2a (strain ATCC BAA-679 / EGD-e)</name>
    <dbReference type="NCBI Taxonomy" id="169963"/>
    <lineage>
        <taxon>Bacteria</taxon>
        <taxon>Bacillati</taxon>
        <taxon>Bacillota</taxon>
        <taxon>Bacilli</taxon>
        <taxon>Bacillales</taxon>
        <taxon>Listeriaceae</taxon>
        <taxon>Listeria</taxon>
    </lineage>
</organism>